<gene>
    <name evidence="3" type="primary">bacD</name>
</gene>
<reference key="1">
    <citation type="journal article" date="2005" name="Arch. Microbiol.">
        <title>bac genes for recombinant bacilysin and anticapsin production in Bacillus host strains.</title>
        <authorList>
            <person name="Steinborn G."/>
            <person name="Hajirezaei M.-R."/>
            <person name="Hofemeister J."/>
        </authorList>
    </citation>
    <scope>NUCLEOTIDE SEQUENCE [GENOMIC DNA]</scope>
    <scope>FUNCTION IN BACILYSIN PRODUCTION</scope>
    <scope>GENE NAME</scope>
    <source>
        <strain>ATCC 15841</strain>
    </source>
</reference>
<sequence>MERKTVLVIADLGGCPPHMFYESAAEKYNLVSFIPRPFAITASHAALIEKYSIAVIKDKDYFKSLADFEHPDSIYWAHEDHDKPEEEVVEEIVKVADMFAVDAITTNNELFIAPMAKACKRLGLRGAGVQAAENARDKNKMRAAFNRAGVKSIKNKRVTTLEDFRAALQEIGTPLILKPTYLASSIGVTLIKEMETAEAEFNRVNEYLKSINVPKAVTFEAPFIAEEFLQGEYDDWYETSGYSDYISIEGIMADGEYFPVAIHDKTPQIGFTETAHITPSILDDDAKRKIVEAAKKANEGLGLENCATHTEIKLMKNREAGLIESAPRFAGWNMIPNIKKVFGVDMAQLLLDVLCFGKEADLPKGLLEQEPCYVADCHLYPQHFKENGQLPETVVDFVIESIEIPDGVLKGDTELVSFSAAEAGTSVDLRLFEAFNSIAAFELKGSNSNDVAESIKQIQQQAKLTAKYALSV</sequence>
<organism>
    <name type="scientific">Bacillus amyloliquefaciens</name>
    <name type="common">Bacillus velezensis</name>
    <dbReference type="NCBI Taxonomy" id="1390"/>
    <lineage>
        <taxon>Bacteria</taxon>
        <taxon>Bacillati</taxon>
        <taxon>Bacillota</taxon>
        <taxon>Bacilli</taxon>
        <taxon>Bacillales</taxon>
        <taxon>Bacillaceae</taxon>
        <taxon>Bacillus</taxon>
        <taxon>Bacillus amyloliquefaciens group</taxon>
    </lineage>
</organism>
<evidence type="ECO:0000250" key="1">
    <source>
        <dbReference type="UniProtKB" id="P39641"/>
    </source>
</evidence>
<evidence type="ECO:0000255" key="2">
    <source>
        <dbReference type="PROSITE-ProRule" id="PRU00409"/>
    </source>
</evidence>
<evidence type="ECO:0000303" key="3">
    <source>
    </source>
</evidence>
<evidence type="ECO:0000305" key="4">
    <source>
    </source>
</evidence>
<proteinExistence type="evidence at protein level"/>
<feature type="chain" id="PRO_0000064803" description="Alanine--anticapsin ligase">
    <location>
        <begin position="1"/>
        <end position="472"/>
    </location>
</feature>
<feature type="domain" description="ATP-grasp" evidence="2">
    <location>
        <begin position="142"/>
        <end position="355"/>
    </location>
</feature>
<feature type="binding site" evidence="1">
    <location>
        <position position="109"/>
    </location>
    <ligand>
        <name>Mg(2+)</name>
        <dbReference type="ChEBI" id="CHEBI:18420"/>
        <label>1</label>
    </ligand>
</feature>
<feature type="binding site" evidence="1">
    <location>
        <position position="138"/>
    </location>
    <ligand>
        <name>ATP</name>
        <dbReference type="ChEBI" id="CHEBI:30616"/>
    </ligand>
</feature>
<feature type="binding site" evidence="1">
    <location>
        <position position="178"/>
    </location>
    <ligand>
        <name>ATP</name>
        <dbReference type="ChEBI" id="CHEBI:30616"/>
    </ligand>
</feature>
<feature type="binding site" evidence="1">
    <location>
        <position position="182"/>
    </location>
    <ligand>
        <name>Mg(2+)</name>
        <dbReference type="ChEBI" id="CHEBI:18420"/>
        <label>1</label>
    </ligand>
</feature>
<feature type="binding site" evidence="1">
    <location>
        <begin position="184"/>
        <end position="185"/>
    </location>
    <ligand>
        <name>ATP</name>
        <dbReference type="ChEBI" id="CHEBI:30616"/>
    </ligand>
</feature>
<feature type="binding site" evidence="1">
    <location>
        <begin position="226"/>
        <end position="229"/>
    </location>
    <ligand>
        <name>ATP</name>
        <dbReference type="ChEBI" id="CHEBI:30616"/>
    </ligand>
</feature>
<feature type="binding site" evidence="1">
    <location>
        <position position="268"/>
    </location>
    <ligand>
        <name>ATP</name>
        <dbReference type="ChEBI" id="CHEBI:30616"/>
    </ligand>
</feature>
<feature type="binding site" evidence="1">
    <location>
        <position position="273"/>
    </location>
    <ligand>
        <name>substrate</name>
    </ligand>
</feature>
<feature type="binding site" evidence="1">
    <location>
        <begin position="309"/>
        <end position="311"/>
    </location>
    <ligand>
        <name>substrate</name>
    </ligand>
</feature>
<feature type="binding site" evidence="1">
    <location>
        <position position="311"/>
    </location>
    <ligand>
        <name>Mg(2+)</name>
        <dbReference type="ChEBI" id="CHEBI:18420"/>
        <label>2</label>
    </ligand>
</feature>
<feature type="binding site" evidence="1">
    <location>
        <position position="324"/>
    </location>
    <ligand>
        <name>Mg(2+)</name>
        <dbReference type="ChEBI" id="CHEBI:18420"/>
        <label>1</label>
    </ligand>
</feature>
<feature type="binding site" evidence="1">
    <location>
        <position position="324"/>
    </location>
    <ligand>
        <name>Mg(2+)</name>
        <dbReference type="ChEBI" id="CHEBI:18420"/>
        <label>2</label>
    </ligand>
</feature>
<feature type="binding site" evidence="1">
    <location>
        <begin position="328"/>
        <end position="331"/>
    </location>
    <ligand>
        <name>substrate</name>
    </ligand>
</feature>
<feature type="site" description="Plays a key role in restricting the N-terminal substrate specificity to small amino acids such as L-Ala" evidence="1">
    <location>
        <position position="332"/>
    </location>
</feature>
<protein>
    <recommendedName>
        <fullName evidence="1">Alanine--anticapsin ligase</fullName>
        <ecNumber evidence="1">6.3.2.49</ecNumber>
    </recommendedName>
    <alternativeName>
        <fullName evidence="1">ATP-dependent dipeptide ligase</fullName>
    </alternativeName>
    <alternativeName>
        <fullName evidence="1">Bacilysin synthetase</fullName>
    </alternativeName>
    <alternativeName>
        <fullName evidence="1">L-Ala-L-amino acid dipeptide ligase</fullName>
    </alternativeName>
    <alternativeName>
        <fullName evidence="1">L-alanine--L-anticapsin ligase</fullName>
    </alternativeName>
    <alternativeName>
        <fullName evidence="1">L-amino acid ligase</fullName>
        <shortName evidence="1">Lal</shortName>
    </alternativeName>
</protein>
<keyword id="KW-0045">Antibiotic biosynthesis</keyword>
<keyword id="KW-0067">ATP-binding</keyword>
<keyword id="KW-0436">Ligase</keyword>
<keyword id="KW-0460">Magnesium</keyword>
<keyword id="KW-0479">Metal-binding</keyword>
<keyword id="KW-0547">Nucleotide-binding</keyword>
<accession>Q8KWS8</accession>
<name>BACD_BACAM</name>
<dbReference type="EC" id="6.3.2.49" evidence="1"/>
<dbReference type="EMBL" id="AF396779">
    <property type="protein sequence ID" value="AAM90576.1"/>
    <property type="molecule type" value="Genomic_DNA"/>
</dbReference>
<dbReference type="SMR" id="Q8KWS8"/>
<dbReference type="STRING" id="692420.BAMF_3604"/>
<dbReference type="eggNOG" id="COG0151">
    <property type="taxonomic scope" value="Bacteria"/>
</dbReference>
<dbReference type="BRENDA" id="6.3.2.49">
    <property type="organism ID" value="630"/>
</dbReference>
<dbReference type="UniPathway" id="UPA00100"/>
<dbReference type="GO" id="GO:0005524">
    <property type="term" value="F:ATP binding"/>
    <property type="evidence" value="ECO:0007669"/>
    <property type="project" value="UniProtKB-KW"/>
</dbReference>
<dbReference type="GO" id="GO:0034026">
    <property type="term" value="F:L-amino-acid alpha-ligase activity"/>
    <property type="evidence" value="ECO:0007669"/>
    <property type="project" value="UniProtKB-EC"/>
</dbReference>
<dbReference type="GO" id="GO:0046872">
    <property type="term" value="F:metal ion binding"/>
    <property type="evidence" value="ECO:0007669"/>
    <property type="project" value="UniProtKB-KW"/>
</dbReference>
<dbReference type="GO" id="GO:0017000">
    <property type="term" value="P:antibiotic biosynthetic process"/>
    <property type="evidence" value="ECO:0007669"/>
    <property type="project" value="UniProtKB-KW"/>
</dbReference>
<dbReference type="Gene3D" id="3.40.50.20">
    <property type="match status" value="1"/>
</dbReference>
<dbReference type="Gene3D" id="3.90.1170.60">
    <property type="match status" value="1"/>
</dbReference>
<dbReference type="Gene3D" id="3.30.1490.20">
    <property type="entry name" value="ATP-grasp fold, A domain"/>
    <property type="match status" value="1"/>
</dbReference>
<dbReference type="Gene3D" id="3.30.470.20">
    <property type="entry name" value="ATP-grasp fold, B domain"/>
    <property type="match status" value="1"/>
</dbReference>
<dbReference type="InterPro" id="IPR052032">
    <property type="entry name" value="ATP-dep_AA_Ligase"/>
</dbReference>
<dbReference type="InterPro" id="IPR011761">
    <property type="entry name" value="ATP-grasp"/>
</dbReference>
<dbReference type="InterPro" id="IPR013815">
    <property type="entry name" value="ATP_grasp_subdomain_1"/>
</dbReference>
<dbReference type="PANTHER" id="PTHR43585:SF2">
    <property type="entry name" value="ATP-GRASP ENZYME FSQD"/>
    <property type="match status" value="1"/>
</dbReference>
<dbReference type="PANTHER" id="PTHR43585">
    <property type="entry name" value="FUMIPYRROLE BIOSYNTHESIS PROTEIN C"/>
    <property type="match status" value="1"/>
</dbReference>
<dbReference type="Pfam" id="PF13535">
    <property type="entry name" value="ATP-grasp_4"/>
    <property type="match status" value="1"/>
</dbReference>
<dbReference type="SUPFAM" id="SSF56059">
    <property type="entry name" value="Glutathione synthetase ATP-binding domain-like"/>
    <property type="match status" value="1"/>
</dbReference>
<dbReference type="PROSITE" id="PS50975">
    <property type="entry name" value="ATP_GRASP"/>
    <property type="match status" value="1"/>
</dbReference>
<comment type="function">
    <text evidence="1">Part of the bacABCDEFG operon responsible for the biosynthesis of bacilysin, an irreversible inactivator of the glutaminase domain of glucosamine synthetase. Catalyzes the formation of alpha-dipeptides from various L-amino acids in the presence of ATP. In vivo catalyzes the ligation of L-alanine and L-anticapsin (epoxycyclohexanonyl-Ala) to produce the final bacilysin antibiotic (L-Ala-L-4S-cyclohexenonyl-Ala dipeptide).</text>
</comment>
<comment type="catalytic activity">
    <reaction evidence="1">
        <text>L-anticapsin + L-alanine + ATP = bacilysin + ADP + phosphate + H(+)</text>
        <dbReference type="Rhea" id="RHEA:44332"/>
        <dbReference type="ChEBI" id="CHEBI:15378"/>
        <dbReference type="ChEBI" id="CHEBI:30616"/>
        <dbReference type="ChEBI" id="CHEBI:43474"/>
        <dbReference type="ChEBI" id="CHEBI:57972"/>
        <dbReference type="ChEBI" id="CHEBI:84310"/>
        <dbReference type="ChEBI" id="CHEBI:84311"/>
        <dbReference type="ChEBI" id="CHEBI:456216"/>
        <dbReference type="EC" id="6.3.2.49"/>
    </reaction>
</comment>
<comment type="cofactor">
    <cofactor evidence="1">
        <name>Mg(2+)</name>
        <dbReference type="ChEBI" id="CHEBI:18420"/>
    </cofactor>
    <text evidence="1">Binds 2 Mg(2+) ions per monomer.</text>
</comment>
<comment type="pathway">
    <text evidence="4">Antibiotic biosynthesis; bacilysin biosynthesis.</text>
</comment>
<comment type="subunit">
    <text evidence="1">Monomer or homodimer.</text>
</comment>